<comment type="function">
    <text evidence="2 3 4 6">Selectively binds with high-affinity to the a2B-adrenoceptor subtype (ADRA2B) (PubMed:20466015). The toxin reversibly binds to ADRA2B, and its mode of inhibition is non-competitive (PubMed:20466015). The toxin has also been described to bind with high affinity to all muscarinic receptor subtypes (Ki=23 nM (on CHRM1), Ki=44 nM (on CHRM2), Ki=3 nM (on CHRM3), Ki=5 nM (on CHRM4), and Ki=8 nM (on CHRM5)) but no other data support these affinity values (PubMed:8536706).</text>
</comment>
<comment type="subcellular location">
    <subcellularLocation>
        <location evidence="6">Secreted</location>
    </subcellularLocation>
</comment>
<comment type="tissue specificity">
    <text evidence="8">Expressed by the venom gland.</text>
</comment>
<comment type="miscellaneous">
    <text evidence="3 4">Negative results: does not affect most adrenoceptors (ADRA1A, ADRA1B, ADRA2A and ADRA2C) and muscarinic receptors (PubMed:20466015, PubMed:21557730). Does not affect beta-1 (ADRB1) and beta-2 (ADRB2) adrenoceptors (PubMed:21557730).</text>
</comment>
<comment type="similarity">
    <text evidence="8">Belongs to the three-finger toxin family. Short-chain subfamily. Aminergic toxin sub-subfamily.</text>
</comment>
<keyword id="KW-0002">3D-structure</keyword>
<keyword id="KW-0903">Direct protein sequencing</keyword>
<keyword id="KW-1015">Disulfide bond</keyword>
<keyword id="KW-1213">G-protein coupled receptor impairing toxin</keyword>
<keyword id="KW-0528">Neurotoxin</keyword>
<keyword id="KW-0629">Postsynaptic neurotoxin</keyword>
<keyword id="KW-0964">Secreted</keyword>
<keyword id="KW-0800">Toxin</keyword>
<name>3SIMA_DENPO</name>
<reference key="1">
    <citation type="journal article" date="1995" name="Eur. J. Biochem.">
        <title>Muscarinic toxins from the black mamba Dendroaspis polylepis.</title>
        <authorList>
            <person name="Jolkkonen M."/>
            <person name="van Giersbergen P.L.M."/>
            <person name="Hellman U."/>
            <person name="Wernstedt C."/>
            <person name="Oras A."/>
            <person name="Satyapan N."/>
            <person name="Adem A."/>
            <person name="Karlsson E."/>
        </authorList>
    </citation>
    <scope>PROTEIN SEQUENCE</scope>
    <scope>SUBCELLULAR LOCATION</scope>
    <scope>FUNCTION</scope>
    <source>
        <tissue>Venom</tissue>
    </source>
</reference>
<reference key="2">
    <citation type="journal article" date="2001" name="Toxicon">
        <title>Kinetic evidence for different mechanisms of interaction of black mamba toxins MT alpha and MT beta with muscarinic receptors.</title>
        <authorList>
            <person name="Jolkkonen M."/>
            <person name="Oras A."/>
            <person name="Toomela T."/>
            <person name="Karlsson E."/>
            <person name="Jarv J."/>
            <person name="Akerman K.E."/>
        </authorList>
    </citation>
    <scope>MECHANISM OF BINDING</scope>
    <scope>FUNCTION</scope>
</reference>
<reference key="3">
    <citation type="journal article" date="2010" name="Toxicon">
        <title>The three-finger toxin MTalpha is a selective alpha(2B)-adrenoceptor antagonist.</title>
        <authorList>
            <person name="Koivula K."/>
            <person name="Rondinelli S."/>
            <person name="Nasman J."/>
        </authorList>
    </citation>
    <scope>FUNCTION</scope>
</reference>
<reference key="4">
    <citation type="journal article" date="2011" name="Br. J. Pharmacol.">
        <title>Adrenoceptor activity of muscarinic toxins identified from mamba venoms.</title>
        <authorList>
            <person name="Naereoja K."/>
            <person name="Kukkonen J.P."/>
            <person name="Rondinelli S."/>
            <person name="Toivola D.M."/>
            <person name="Meriluoto J."/>
            <person name="Naesman J."/>
        </authorList>
    </citation>
    <scope>FUNCTION</scope>
</reference>
<reference key="5">
    <citation type="journal article" date="2017" name="Sci. Rep.">
        <title>Ancestral protein resurrection and engineering opportunities of the mamba aminergic toxins.</title>
        <authorList>
            <person name="Blanchet G."/>
            <person name="Alili D."/>
            <person name="Protte A."/>
            <person name="Upert G."/>
            <person name="Gilles N."/>
            <person name="Tepshi L."/>
            <person name="Stura E.A."/>
            <person name="Mourier G."/>
            <person name="Servent D."/>
        </authorList>
    </citation>
    <scope>MUTAGENESIS OF LEU-31</scope>
</reference>
<proteinExistence type="evidence at protein level"/>
<evidence type="ECO:0000250" key="1">
    <source>
        <dbReference type="UniProtKB" id="P60301"/>
    </source>
</evidence>
<evidence type="ECO:0000269" key="2">
    <source>
    </source>
</evidence>
<evidence type="ECO:0000269" key="3">
    <source>
    </source>
</evidence>
<evidence type="ECO:0000269" key="4">
    <source>
    </source>
</evidence>
<evidence type="ECO:0000269" key="5">
    <source>
    </source>
</evidence>
<evidence type="ECO:0000269" key="6">
    <source>
    </source>
</evidence>
<evidence type="ECO:0000303" key="7">
    <source>
    </source>
</evidence>
<evidence type="ECO:0000305" key="8"/>
<evidence type="ECO:0007829" key="9">
    <source>
        <dbReference type="PDB" id="7ULS"/>
    </source>
</evidence>
<feature type="chain" id="PRO_0000093648" description="Muscarinic toxin alpha" evidence="6">
    <location>
        <begin position="1"/>
        <end position="66"/>
    </location>
</feature>
<feature type="disulfide bond" evidence="1">
    <location>
        <begin position="3"/>
        <end position="24"/>
    </location>
</feature>
<feature type="disulfide bond" evidence="1">
    <location>
        <begin position="17"/>
        <end position="42"/>
    </location>
</feature>
<feature type="disulfide bond" evidence="1">
    <location>
        <begin position="46"/>
        <end position="58"/>
    </location>
</feature>
<feature type="disulfide bond" evidence="1">
    <location>
        <begin position="59"/>
        <end position="64"/>
    </location>
</feature>
<feature type="mutagenesis site" description="In AncTx6; 10-fold decrease in inhibition potency on adrenergic receptor ADRA2B." evidence="5">
    <original>L</original>
    <variation>I</variation>
    <location>
        <position position="31"/>
    </location>
</feature>
<feature type="strand" evidence="9">
    <location>
        <begin position="2"/>
        <end position="8"/>
    </location>
</feature>
<feature type="strand" evidence="9">
    <location>
        <begin position="11"/>
        <end position="16"/>
    </location>
</feature>
<feature type="strand" evidence="9">
    <location>
        <begin position="23"/>
        <end position="31"/>
    </location>
</feature>
<feature type="strand" evidence="9">
    <location>
        <begin position="39"/>
        <end position="45"/>
    </location>
</feature>
<feature type="strand" evidence="9">
    <location>
        <begin position="54"/>
        <end position="59"/>
    </location>
</feature>
<feature type="turn" evidence="9">
    <location>
        <begin position="62"/>
        <end position="65"/>
    </location>
</feature>
<protein>
    <recommendedName>
        <fullName evidence="7">Muscarinic toxin alpha</fullName>
        <shortName evidence="7">MT-alpha</shortName>
    </recommendedName>
</protein>
<accession>P80494</accession>
<sequence length="66" mass="7554">LTCVTSKSIFGITTENCPDGQNLCFKKWYYLNHRYSDITWGCAATCPKPTNVRETIHCCETDKCNE</sequence>
<organism>
    <name type="scientific">Dendroaspis polylepis polylepis</name>
    <name type="common">Black mamba</name>
    <dbReference type="NCBI Taxonomy" id="8620"/>
    <lineage>
        <taxon>Eukaryota</taxon>
        <taxon>Metazoa</taxon>
        <taxon>Chordata</taxon>
        <taxon>Craniata</taxon>
        <taxon>Vertebrata</taxon>
        <taxon>Euteleostomi</taxon>
        <taxon>Lepidosauria</taxon>
        <taxon>Squamata</taxon>
        <taxon>Bifurcata</taxon>
        <taxon>Unidentata</taxon>
        <taxon>Episquamata</taxon>
        <taxon>Toxicofera</taxon>
        <taxon>Serpentes</taxon>
        <taxon>Colubroidea</taxon>
        <taxon>Elapidae</taxon>
        <taxon>Elapinae</taxon>
        <taxon>Dendroaspis</taxon>
    </lineage>
</organism>
<dbReference type="PIR" id="S67984">
    <property type="entry name" value="S67984"/>
</dbReference>
<dbReference type="PDB" id="7ULS">
    <property type="method" value="X-ray"/>
    <property type="resolution" value="1.80 A"/>
    <property type="chains" value="A=1-66"/>
</dbReference>
<dbReference type="PDBsum" id="7ULS"/>
<dbReference type="SMR" id="P80494"/>
<dbReference type="GO" id="GO:0005576">
    <property type="term" value="C:extracellular region"/>
    <property type="evidence" value="ECO:0007669"/>
    <property type="project" value="UniProtKB-SubCell"/>
</dbReference>
<dbReference type="GO" id="GO:0090729">
    <property type="term" value="F:toxin activity"/>
    <property type="evidence" value="ECO:0007669"/>
    <property type="project" value="UniProtKB-KW"/>
</dbReference>
<dbReference type="CDD" id="cd00206">
    <property type="entry name" value="TFP_snake_toxin"/>
    <property type="match status" value="1"/>
</dbReference>
<dbReference type="FunFam" id="2.10.60.10:FF:000024">
    <property type="entry name" value="Cytotoxin 1"/>
    <property type="match status" value="1"/>
</dbReference>
<dbReference type="Gene3D" id="2.10.60.10">
    <property type="entry name" value="CD59"/>
    <property type="match status" value="1"/>
</dbReference>
<dbReference type="InterPro" id="IPR003571">
    <property type="entry name" value="Snake_3FTx"/>
</dbReference>
<dbReference type="InterPro" id="IPR045860">
    <property type="entry name" value="Snake_toxin-like_sf"/>
</dbReference>
<dbReference type="InterPro" id="IPR018354">
    <property type="entry name" value="Snake_toxin_con_site"/>
</dbReference>
<dbReference type="InterPro" id="IPR054131">
    <property type="entry name" value="Toxin_cobra-type"/>
</dbReference>
<dbReference type="Pfam" id="PF21947">
    <property type="entry name" value="Toxin_cobra-type"/>
    <property type="match status" value="1"/>
</dbReference>
<dbReference type="SUPFAM" id="SSF57302">
    <property type="entry name" value="Snake toxin-like"/>
    <property type="match status" value="1"/>
</dbReference>
<dbReference type="PROSITE" id="PS00272">
    <property type="entry name" value="SNAKE_TOXIN"/>
    <property type="match status" value="1"/>
</dbReference>